<accession>Q03F36</accession>
<feature type="chain" id="PRO_1000070312" description="Ribonuclease Z">
    <location>
        <begin position="1"/>
        <end position="308"/>
    </location>
</feature>
<feature type="active site" description="Proton acceptor" evidence="1">
    <location>
        <position position="67"/>
    </location>
</feature>
<feature type="binding site" evidence="1">
    <location>
        <position position="63"/>
    </location>
    <ligand>
        <name>Zn(2+)</name>
        <dbReference type="ChEBI" id="CHEBI:29105"/>
        <label>1</label>
        <note>catalytic</note>
    </ligand>
</feature>
<feature type="binding site" evidence="1">
    <location>
        <position position="65"/>
    </location>
    <ligand>
        <name>Zn(2+)</name>
        <dbReference type="ChEBI" id="CHEBI:29105"/>
        <label>1</label>
        <note>catalytic</note>
    </ligand>
</feature>
<feature type="binding site" evidence="1">
    <location>
        <position position="67"/>
    </location>
    <ligand>
        <name>Zn(2+)</name>
        <dbReference type="ChEBI" id="CHEBI:29105"/>
        <label>2</label>
        <note>catalytic</note>
    </ligand>
</feature>
<feature type="binding site" evidence="1">
    <location>
        <position position="68"/>
    </location>
    <ligand>
        <name>Zn(2+)</name>
        <dbReference type="ChEBI" id="CHEBI:29105"/>
        <label>2</label>
        <note>catalytic</note>
    </ligand>
</feature>
<feature type="binding site" evidence="1">
    <location>
        <position position="141"/>
    </location>
    <ligand>
        <name>Zn(2+)</name>
        <dbReference type="ChEBI" id="CHEBI:29105"/>
        <label>1</label>
        <note>catalytic</note>
    </ligand>
</feature>
<feature type="binding site" evidence="1">
    <location>
        <position position="212"/>
    </location>
    <ligand>
        <name>Zn(2+)</name>
        <dbReference type="ChEBI" id="CHEBI:29105"/>
        <label>1</label>
        <note>catalytic</note>
    </ligand>
</feature>
<feature type="binding site" evidence="1">
    <location>
        <position position="212"/>
    </location>
    <ligand>
        <name>Zn(2+)</name>
        <dbReference type="ChEBI" id="CHEBI:29105"/>
        <label>2</label>
        <note>catalytic</note>
    </ligand>
</feature>
<feature type="binding site" evidence="1">
    <location>
        <position position="270"/>
    </location>
    <ligand>
        <name>Zn(2+)</name>
        <dbReference type="ChEBI" id="CHEBI:29105"/>
        <label>2</label>
        <note>catalytic</note>
    </ligand>
</feature>
<keyword id="KW-0255">Endonuclease</keyword>
<keyword id="KW-0378">Hydrolase</keyword>
<keyword id="KW-0479">Metal-binding</keyword>
<keyword id="KW-0540">Nuclease</keyword>
<keyword id="KW-0819">tRNA processing</keyword>
<keyword id="KW-0862">Zinc</keyword>
<comment type="function">
    <text evidence="1">Zinc phosphodiesterase, which displays some tRNA 3'-processing endonuclease activity. Probably involved in tRNA maturation, by removing a 3'-trailer from precursor tRNA.</text>
</comment>
<comment type="catalytic activity">
    <reaction evidence="1">
        <text>Endonucleolytic cleavage of RNA, removing extra 3' nucleotides from tRNA precursor, generating 3' termini of tRNAs. A 3'-hydroxy group is left at the tRNA terminus and a 5'-phosphoryl group is left at the trailer molecule.</text>
        <dbReference type="EC" id="3.1.26.11"/>
    </reaction>
</comment>
<comment type="cofactor">
    <cofactor evidence="1">
        <name>Zn(2+)</name>
        <dbReference type="ChEBI" id="CHEBI:29105"/>
    </cofactor>
    <text evidence="1">Binds 2 Zn(2+) ions.</text>
</comment>
<comment type="subunit">
    <text evidence="1">Homodimer.</text>
</comment>
<comment type="similarity">
    <text evidence="1">Belongs to the RNase Z family.</text>
</comment>
<evidence type="ECO:0000255" key="1">
    <source>
        <dbReference type="HAMAP-Rule" id="MF_01818"/>
    </source>
</evidence>
<dbReference type="EC" id="3.1.26.11" evidence="1"/>
<dbReference type="EMBL" id="CP000422">
    <property type="protein sequence ID" value="ABJ68186.1"/>
    <property type="molecule type" value="Genomic_DNA"/>
</dbReference>
<dbReference type="RefSeq" id="WP_011673512.1">
    <property type="nucleotide sequence ID" value="NC_008525.1"/>
</dbReference>
<dbReference type="SMR" id="Q03F36"/>
<dbReference type="STRING" id="278197.PEPE_1132"/>
<dbReference type="GeneID" id="33062497"/>
<dbReference type="KEGG" id="ppe:PEPE_1132"/>
<dbReference type="eggNOG" id="COG1234">
    <property type="taxonomic scope" value="Bacteria"/>
</dbReference>
<dbReference type="HOGENOM" id="CLU_031317_2_0_9"/>
<dbReference type="OrthoDB" id="9800940at2"/>
<dbReference type="Proteomes" id="UP000000773">
    <property type="component" value="Chromosome"/>
</dbReference>
<dbReference type="GO" id="GO:0042781">
    <property type="term" value="F:3'-tRNA processing endoribonuclease activity"/>
    <property type="evidence" value="ECO:0007669"/>
    <property type="project" value="UniProtKB-UniRule"/>
</dbReference>
<dbReference type="GO" id="GO:0008270">
    <property type="term" value="F:zinc ion binding"/>
    <property type="evidence" value="ECO:0007669"/>
    <property type="project" value="UniProtKB-UniRule"/>
</dbReference>
<dbReference type="CDD" id="cd07717">
    <property type="entry name" value="RNaseZ_ZiPD-like_MBL-fold"/>
    <property type="match status" value="1"/>
</dbReference>
<dbReference type="FunFam" id="3.60.15.10:FF:000002">
    <property type="entry name" value="Ribonuclease Z"/>
    <property type="match status" value="1"/>
</dbReference>
<dbReference type="Gene3D" id="3.60.15.10">
    <property type="entry name" value="Ribonuclease Z/Hydroxyacylglutathione hydrolase-like"/>
    <property type="match status" value="1"/>
</dbReference>
<dbReference type="HAMAP" id="MF_01818">
    <property type="entry name" value="RNase_Z_BN"/>
    <property type="match status" value="1"/>
</dbReference>
<dbReference type="InterPro" id="IPR001279">
    <property type="entry name" value="Metallo-B-lactamas"/>
</dbReference>
<dbReference type="InterPro" id="IPR036866">
    <property type="entry name" value="RibonucZ/Hydroxyglut_hydro"/>
</dbReference>
<dbReference type="InterPro" id="IPR013471">
    <property type="entry name" value="RNase_Z/BN"/>
</dbReference>
<dbReference type="NCBIfam" id="NF000801">
    <property type="entry name" value="PRK00055.1-3"/>
    <property type="match status" value="1"/>
</dbReference>
<dbReference type="NCBIfam" id="TIGR02651">
    <property type="entry name" value="RNase_Z"/>
    <property type="match status" value="1"/>
</dbReference>
<dbReference type="PANTHER" id="PTHR46018">
    <property type="entry name" value="ZINC PHOSPHODIESTERASE ELAC PROTEIN 1"/>
    <property type="match status" value="1"/>
</dbReference>
<dbReference type="PANTHER" id="PTHR46018:SF2">
    <property type="entry name" value="ZINC PHOSPHODIESTERASE ELAC PROTEIN 1"/>
    <property type="match status" value="1"/>
</dbReference>
<dbReference type="Pfam" id="PF00753">
    <property type="entry name" value="Lactamase_B"/>
    <property type="match status" value="1"/>
</dbReference>
<dbReference type="SUPFAM" id="SSF56281">
    <property type="entry name" value="Metallo-hydrolase/oxidoreductase"/>
    <property type="match status" value="1"/>
</dbReference>
<sequence length="308" mass="34271">MQLEFLGTGAGSPGKFRNVTSVALKLLDESNEVWLFDCGEATQHQILKTNIKPRKIDKIFITHLHGDHIFGLPGFLSSRSNQGGSEELTIFGPTGIKDFVMTSLRISESKLSYRIKFVEIAQEGVLFEDQNYIVNVAELDHRIKSYGFRVKEKDHPGELLVDKLKELAIPSGPIYGQIKQGKEVTLDDGRVINGQDFIGKPQPGRVVTVLGDTRQTPNIELLAKDADALVHESTFGKQEGSLARNYYHSTNIQAAKIAKQANARQLLLTHISARYTGKLSKQLESDAKEIFSNSKVVRDFDIIDIPLP</sequence>
<proteinExistence type="inferred from homology"/>
<protein>
    <recommendedName>
        <fullName evidence="1">Ribonuclease Z</fullName>
        <shortName evidence="1">RNase Z</shortName>
        <ecNumber evidence="1">3.1.26.11</ecNumber>
    </recommendedName>
    <alternativeName>
        <fullName evidence="1">tRNA 3 endonuclease</fullName>
    </alternativeName>
    <alternativeName>
        <fullName evidence="1">tRNase Z</fullName>
    </alternativeName>
</protein>
<name>RNZ_PEDPA</name>
<reference key="1">
    <citation type="journal article" date="2006" name="Proc. Natl. Acad. Sci. U.S.A.">
        <title>Comparative genomics of the lactic acid bacteria.</title>
        <authorList>
            <person name="Makarova K.S."/>
            <person name="Slesarev A."/>
            <person name="Wolf Y.I."/>
            <person name="Sorokin A."/>
            <person name="Mirkin B."/>
            <person name="Koonin E.V."/>
            <person name="Pavlov A."/>
            <person name="Pavlova N."/>
            <person name="Karamychev V."/>
            <person name="Polouchine N."/>
            <person name="Shakhova V."/>
            <person name="Grigoriev I."/>
            <person name="Lou Y."/>
            <person name="Rohksar D."/>
            <person name="Lucas S."/>
            <person name="Huang K."/>
            <person name="Goodstein D.M."/>
            <person name="Hawkins T."/>
            <person name="Plengvidhya V."/>
            <person name="Welker D."/>
            <person name="Hughes J."/>
            <person name="Goh Y."/>
            <person name="Benson A."/>
            <person name="Baldwin K."/>
            <person name="Lee J.-H."/>
            <person name="Diaz-Muniz I."/>
            <person name="Dosti B."/>
            <person name="Smeianov V."/>
            <person name="Wechter W."/>
            <person name="Barabote R."/>
            <person name="Lorca G."/>
            <person name="Altermann E."/>
            <person name="Barrangou R."/>
            <person name="Ganesan B."/>
            <person name="Xie Y."/>
            <person name="Rawsthorne H."/>
            <person name="Tamir D."/>
            <person name="Parker C."/>
            <person name="Breidt F."/>
            <person name="Broadbent J.R."/>
            <person name="Hutkins R."/>
            <person name="O'Sullivan D."/>
            <person name="Steele J."/>
            <person name="Unlu G."/>
            <person name="Saier M.H. Jr."/>
            <person name="Klaenhammer T."/>
            <person name="Richardson P."/>
            <person name="Kozyavkin S."/>
            <person name="Weimer B.C."/>
            <person name="Mills D.A."/>
        </authorList>
    </citation>
    <scope>NUCLEOTIDE SEQUENCE [LARGE SCALE GENOMIC DNA]</scope>
    <source>
        <strain>ATCC 25745 / CCUG 21536 / LMG 10740 / 183-1w</strain>
    </source>
</reference>
<gene>
    <name evidence="1" type="primary">rnz</name>
    <name type="ordered locus">PEPE_1132</name>
</gene>
<organism>
    <name type="scientific">Pediococcus pentosaceus (strain ATCC 25745 / CCUG 21536 / LMG 10740 / 183-1w)</name>
    <dbReference type="NCBI Taxonomy" id="278197"/>
    <lineage>
        <taxon>Bacteria</taxon>
        <taxon>Bacillati</taxon>
        <taxon>Bacillota</taxon>
        <taxon>Bacilli</taxon>
        <taxon>Lactobacillales</taxon>
        <taxon>Lactobacillaceae</taxon>
        <taxon>Pediococcus</taxon>
    </lineage>
</organism>